<keyword id="KW-0119">Carbohydrate metabolism</keyword>
<keyword id="KW-0134">Cell wall</keyword>
<keyword id="KW-0136">Cellulose degradation</keyword>
<keyword id="KW-0186">Copper</keyword>
<keyword id="KW-1015">Disulfide bond</keyword>
<keyword id="KW-0325">Glycoprotein</keyword>
<keyword id="KW-0479">Metal-binding</keyword>
<keyword id="KW-0503">Monooxygenase</keyword>
<keyword id="KW-0560">Oxidoreductase</keyword>
<keyword id="KW-0624">Polysaccharide degradation</keyword>
<keyword id="KW-0964">Secreted</keyword>
<keyword id="KW-0732">Signal</keyword>
<protein>
    <recommendedName>
        <fullName evidence="8">AA9 family lytic polysaccharide monooxygenase CEL1</fullName>
        <shortName evidence="8">LPMO CEL1</shortName>
        <ecNumber evidence="7">1.14.99.56</ecNumber>
    </recommendedName>
    <alternativeName>
        <fullName evidence="9">Cellulase 1</fullName>
        <shortName evidence="8">CEL1</shortName>
    </alternativeName>
    <alternativeName>
        <fullName evidence="9">Endo-beta-1,4-glucanase CEL1</fullName>
        <shortName evidence="9">Endoglucanase CEL1</shortName>
    </alternativeName>
    <alternativeName>
        <fullName evidence="9">Glycosyl hydrolase 61 family protein CEL1</fullName>
    </alternativeName>
</protein>
<accession>J9VH79</accession>
<dbReference type="EC" id="1.14.99.56" evidence="7"/>
<dbReference type="EMBL" id="CP003820">
    <property type="protein sequence ID" value="AFR92731.2"/>
    <property type="molecule type" value="Genomic_DNA"/>
</dbReference>
<dbReference type="RefSeq" id="XP_012046362.1">
    <property type="nucleotide sequence ID" value="XM_012190972.1"/>
</dbReference>
<dbReference type="SMR" id="J9VH79"/>
<dbReference type="GeneID" id="23884394"/>
<dbReference type="KEGG" id="cng:CNAG_00601"/>
<dbReference type="VEuPathDB" id="FungiDB:CNAG_00601"/>
<dbReference type="HOGENOM" id="CLU_737737_0_0_1"/>
<dbReference type="OrthoDB" id="9154at5206"/>
<dbReference type="Proteomes" id="UP000010091">
    <property type="component" value="Chromosome 1"/>
</dbReference>
<dbReference type="GO" id="GO:0005576">
    <property type="term" value="C:extracellular region"/>
    <property type="evidence" value="ECO:0007669"/>
    <property type="project" value="UniProtKB-KW"/>
</dbReference>
<dbReference type="GO" id="GO:0046872">
    <property type="term" value="F:metal ion binding"/>
    <property type="evidence" value="ECO:0007669"/>
    <property type="project" value="UniProtKB-KW"/>
</dbReference>
<dbReference type="GO" id="GO:0004497">
    <property type="term" value="F:monooxygenase activity"/>
    <property type="evidence" value="ECO:0007669"/>
    <property type="project" value="UniProtKB-KW"/>
</dbReference>
<dbReference type="GO" id="GO:0030245">
    <property type="term" value="P:cellulose catabolic process"/>
    <property type="evidence" value="ECO:0007669"/>
    <property type="project" value="UniProtKB-KW"/>
</dbReference>
<dbReference type="Gene3D" id="2.70.50.70">
    <property type="match status" value="1"/>
</dbReference>
<dbReference type="InterPro" id="IPR049892">
    <property type="entry name" value="AA9"/>
</dbReference>
<dbReference type="InterPro" id="IPR005103">
    <property type="entry name" value="AA9_LPMO"/>
</dbReference>
<dbReference type="PANTHER" id="PTHR33353:SF10">
    <property type="entry name" value="ENDO-BETA-1,4-GLUCANASE D"/>
    <property type="match status" value="1"/>
</dbReference>
<dbReference type="PANTHER" id="PTHR33353">
    <property type="entry name" value="PUTATIVE (AFU_ORTHOLOGUE AFUA_1G12560)-RELATED"/>
    <property type="match status" value="1"/>
</dbReference>
<dbReference type="Pfam" id="PF03443">
    <property type="entry name" value="AA9"/>
    <property type="match status" value="1"/>
</dbReference>
<name>LP9_CRYNH</name>
<feature type="signal peptide" evidence="4">
    <location>
        <begin position="1"/>
        <end position="16"/>
    </location>
</feature>
<feature type="chain" id="PRO_5003829121" description="AA9 family lytic polysaccharide monooxygenase CEL1">
    <location>
        <begin position="17"/>
        <end position="375"/>
    </location>
</feature>
<feature type="region of interest" description="Disordered" evidence="6">
    <location>
        <begin position="287"/>
        <end position="375"/>
    </location>
</feature>
<feature type="compositionally biased region" description="Low complexity" evidence="6">
    <location>
        <begin position="290"/>
        <end position="341"/>
    </location>
</feature>
<feature type="compositionally biased region" description="Basic residues" evidence="6">
    <location>
        <begin position="347"/>
        <end position="369"/>
    </location>
</feature>
<feature type="binding site" evidence="1">
    <location>
        <position position="119"/>
    </location>
    <ligand>
        <name>Cu(2+)</name>
        <dbReference type="ChEBI" id="CHEBI:29036"/>
        <note>catalytic</note>
    </ligand>
</feature>
<feature type="binding site" evidence="2">
    <location>
        <position position="196"/>
    </location>
    <ligand>
        <name>O2</name>
        <dbReference type="ChEBI" id="CHEBI:15379"/>
    </ligand>
</feature>
<feature type="binding site" evidence="1">
    <location>
        <position position="212"/>
    </location>
    <ligand>
        <name>Cu(2+)</name>
        <dbReference type="ChEBI" id="CHEBI:29036"/>
        <note>catalytic</note>
    </ligand>
</feature>
<feature type="glycosylation site" description="N-linked (GlcNAc...) asparagine" evidence="5">
    <location>
        <position position="132"/>
    </location>
</feature>
<feature type="glycosylation site" description="N-linked (GlcNAc...) asparagine" evidence="5">
    <location>
        <position position="197"/>
    </location>
</feature>
<feature type="glycosylation site" description="N-linked (GlcNAc...) asparagine" evidence="5">
    <location>
        <position position="325"/>
    </location>
</feature>
<feature type="disulfide bond" evidence="10">
    <location>
        <begin position="130"/>
        <end position="135"/>
    </location>
</feature>
<feature type="disulfide bond" evidence="10">
    <location>
        <begin position="232"/>
        <end position="237"/>
    </location>
</feature>
<evidence type="ECO:0000250" key="1">
    <source>
        <dbReference type="UniProtKB" id="A0A223GEC9"/>
    </source>
</evidence>
<evidence type="ECO:0000250" key="2">
    <source>
        <dbReference type="UniProtKB" id="Q1K8B6"/>
    </source>
</evidence>
<evidence type="ECO:0000250" key="3">
    <source>
        <dbReference type="UniProtKB" id="Q4WP32"/>
    </source>
</evidence>
<evidence type="ECO:0000255" key="4"/>
<evidence type="ECO:0000255" key="5">
    <source>
        <dbReference type="PROSITE-ProRule" id="PRU00498"/>
    </source>
</evidence>
<evidence type="ECO:0000256" key="6">
    <source>
        <dbReference type="SAM" id="MobiDB-lite"/>
    </source>
</evidence>
<evidence type="ECO:0000269" key="7">
    <source>
    </source>
</evidence>
<evidence type="ECO:0000303" key="8">
    <source>
    </source>
</evidence>
<evidence type="ECO:0000305" key="9"/>
<evidence type="ECO:0000305" key="10">
    <source>
    </source>
</evidence>
<organism>
    <name type="scientific">Cryptococcus neoformans var. grubii serotype A (strain H99 / ATCC 208821 / CBS 10515 / FGSC 9487)</name>
    <name type="common">Filobasidiella neoformans var. grubii</name>
    <dbReference type="NCBI Taxonomy" id="235443"/>
    <lineage>
        <taxon>Eukaryota</taxon>
        <taxon>Fungi</taxon>
        <taxon>Dikarya</taxon>
        <taxon>Basidiomycota</taxon>
        <taxon>Agaricomycotina</taxon>
        <taxon>Tremellomycetes</taxon>
        <taxon>Tremellales</taxon>
        <taxon>Cryptococcaceae</taxon>
        <taxon>Cryptococcus</taxon>
        <taxon>Cryptococcus neoformans species complex</taxon>
    </lineage>
</organism>
<reference key="1">
    <citation type="journal article" date="2014" name="PLoS Genet.">
        <title>Analysis of the genome and transcriptome of Cryptococcus neoformans var. grubii reveals complex RNA expression and microevolution leading to virulence attenuation.</title>
        <authorList>
            <person name="Janbon G."/>
            <person name="Ormerod K.L."/>
            <person name="Paulet D."/>
            <person name="Byrnes E.J. III"/>
            <person name="Yadav V."/>
            <person name="Chatterjee G."/>
            <person name="Mullapudi N."/>
            <person name="Hon C.-C."/>
            <person name="Billmyre R.B."/>
            <person name="Brunel F."/>
            <person name="Bahn Y.-S."/>
            <person name="Chen W."/>
            <person name="Chen Y."/>
            <person name="Chow E.W.L."/>
            <person name="Coppee J.-Y."/>
            <person name="Floyd-Averette A."/>
            <person name="Gaillardin C."/>
            <person name="Gerik K.J."/>
            <person name="Goldberg J."/>
            <person name="Gonzalez-Hilarion S."/>
            <person name="Gujja S."/>
            <person name="Hamlin J.L."/>
            <person name="Hsueh Y.-P."/>
            <person name="Ianiri G."/>
            <person name="Jones S."/>
            <person name="Kodira C.D."/>
            <person name="Kozubowski L."/>
            <person name="Lam W."/>
            <person name="Marra M."/>
            <person name="Mesner L.D."/>
            <person name="Mieczkowski P.A."/>
            <person name="Moyrand F."/>
            <person name="Nielsen K."/>
            <person name="Proux C."/>
            <person name="Rossignol T."/>
            <person name="Schein J.E."/>
            <person name="Sun S."/>
            <person name="Wollschlaeger C."/>
            <person name="Wood I.A."/>
            <person name="Zeng Q."/>
            <person name="Neuveglise C."/>
            <person name="Newlon C.S."/>
            <person name="Perfect J.R."/>
            <person name="Lodge J.K."/>
            <person name="Idnurm A."/>
            <person name="Stajich J.E."/>
            <person name="Kronstad J.W."/>
            <person name="Sanyal K."/>
            <person name="Heitman J."/>
            <person name="Fraser J.A."/>
            <person name="Cuomo C.A."/>
            <person name="Dietrich F.S."/>
        </authorList>
    </citation>
    <scope>NUCLEOTIDE SEQUENCE [LARGE SCALE GENOMIC DNA]</scope>
    <source>
        <strain>H99 / ATCC 208821 / CBS 10515 / FGSC 9487</strain>
    </source>
</reference>
<reference key="2">
    <citation type="journal article" date="2023" name="PLoS Pathog.">
        <title>A fungal lytic polysaccharide monooxygenase is required for cell wall integrity, thermotolerance, and virulence of the fungal human pathogen Cryptococcus neoformans.</title>
        <authorList>
            <person name="Probst C."/>
            <person name="Hallas-Moeller M."/>
            <person name="Ipsen J.O."/>
            <person name="Brooks J.T."/>
            <person name="Andersen K."/>
            <person name="Haon M."/>
            <person name="Berrin J.G."/>
            <person name="Martens H.J."/>
            <person name="Nichols C.B."/>
            <person name="Johansen K.S."/>
            <person name="Alspaugh J.A."/>
        </authorList>
    </citation>
    <scope>FUNCTION</scope>
    <scope>DISRUPTION PHENOTYPE</scope>
    <scope>INDUCTION</scope>
</reference>
<proteinExistence type="evidence at transcript level"/>
<sequence>MLFPALALLCPVLVAAHGQLSWVQVGTGPQYPAWTLDDYYTALYRESDPVWGALPEQKYTRKTDRTDLGFADIFSKSIATGGYEVCKRFDDMSPVGTIPAKAGDQVIVQWSSEWPSEGHPGPIGEWMAKCPNDSCTQVDATTLDWFCIAQHNYDAEIKKWPTEILTESLNRQWIFTLPTDLPPGAYLVRHELIALHNSTGPTPDLVSSPQHYPIGIEIMLDSSGTTLPTLTCKFPGCFSYDDYEWHHNIWDDEWQGLLVKWEFPGIAVYPGGYTTGVVNGASAAVKNGMSSSPSSSSGVSSSSSSSVASSDTSDSTTSSGVVAVNVSAASSPSSSISANSAMATGKKTCKRKKRSKIAGQKRHIHRSRVAHLDRH</sequence>
<gene>
    <name evidence="8" type="primary">CEL1</name>
    <name type="ORF">CNAG_00601</name>
</gene>
<comment type="function">
    <text evidence="7">Lytic polysaccharide monooxygenase (LPMO) that depolymerizes polysaccharides via the oxidation of scissile alpha- or beta-(1-4)-glycosidic bonds, yielding C4 oxidation products (PubMed:37099613). Catalysis by LPMOs requires the reduction of the active-site copper from Cu(II) to Cu(I) by a reducing agent and H(2)O(2) or O(2) as a cosubstrate (PubMed:37099613). Required for the expression of stress response phenotypes, including thermotolerance, cell wall integrity, and efficient cell cycle progression (PubMed:37099613). Promotes intrinsic fungal cell wall remodeling events required for efficient adaptation to the host environment (PubMed:37099613). Required for virulence in a murine inhalational model of cryptococcal infection as well as in Galleria mellonella larvae (PubMed:37099613).</text>
</comment>
<comment type="catalytic activity">
    <reaction evidence="7">
        <text>[(1-&gt;4)-beta-D-glucosyl]n+m + reduced acceptor + O2 = 4-dehydro-beta-D-glucosyl-[(1-&gt;4)-beta-D-glucosyl]n-1 + [(1-&gt;4)-beta-D-glucosyl]m + acceptor + H2O.</text>
        <dbReference type="EC" id="1.14.99.56"/>
    </reaction>
</comment>
<comment type="cofactor">
    <cofactor evidence="3">
        <name>Cu(2+)</name>
        <dbReference type="ChEBI" id="CHEBI:29036"/>
    </cofactor>
    <text evidence="3">Binds 1 copper ion per subunit.</text>
</comment>
<comment type="subcellular location">
    <subcellularLocation>
        <location evidence="7">Secreted</location>
        <location evidence="7">Cell wall</location>
    </subcellularLocation>
    <text evidence="7">Not secreted extracellularly but localizes to the cell surface.</text>
</comment>
<comment type="induction">
    <text evidence="7">Expression is induced under host-like conditions in a RIM pathway-dependent manner.</text>
</comment>
<comment type="disruption phenotype">
    <text evidence="7">Impairs virulence in mouse lungs and in Galleria mellonella models.</text>
</comment>
<comment type="similarity">
    <text evidence="9">Belongs to the polysaccharide monooxygenase AA9 family.</text>
</comment>